<protein>
    <recommendedName>
        <fullName>Protein COS5</fullName>
    </recommendedName>
</protein>
<reference key="1">
    <citation type="journal article" date="1996" name="EMBO J.">
        <title>Complete nucleotide sequence of Saccharomyces cerevisiae chromosome X.</title>
        <authorList>
            <person name="Galibert F."/>
            <person name="Alexandraki D."/>
            <person name="Baur A."/>
            <person name="Boles E."/>
            <person name="Chalwatzis N."/>
            <person name="Chuat J.-C."/>
            <person name="Coster F."/>
            <person name="Cziepluch C."/>
            <person name="de Haan M."/>
            <person name="Domdey H."/>
            <person name="Durand P."/>
            <person name="Entian K.-D."/>
            <person name="Gatius M."/>
            <person name="Goffeau A."/>
            <person name="Grivell L.A."/>
            <person name="Hennemann A."/>
            <person name="Herbert C.J."/>
            <person name="Heumann K."/>
            <person name="Hilger F."/>
            <person name="Hollenberg C.P."/>
            <person name="Huang M.-E."/>
            <person name="Jacq C."/>
            <person name="Jauniaux J.-C."/>
            <person name="Katsoulou C."/>
            <person name="Kirchrath L."/>
            <person name="Kleine K."/>
            <person name="Kordes E."/>
            <person name="Koetter P."/>
            <person name="Liebl S."/>
            <person name="Louis E.J."/>
            <person name="Manus V."/>
            <person name="Mewes H.-W."/>
            <person name="Miosga T."/>
            <person name="Obermaier B."/>
            <person name="Perea J."/>
            <person name="Pohl T.M."/>
            <person name="Portetelle D."/>
            <person name="Pujol A."/>
            <person name="Purnelle B."/>
            <person name="Ramezani Rad M."/>
            <person name="Rasmussen S.W."/>
            <person name="Rose M."/>
            <person name="Rossau R."/>
            <person name="Schaaff-Gerstenschlaeger I."/>
            <person name="Smits P.H.M."/>
            <person name="Scarcez T."/>
            <person name="Soriano N."/>
            <person name="To Van D."/>
            <person name="Tzermia M."/>
            <person name="Van Broekhoven A."/>
            <person name="Vandenbol M."/>
            <person name="Wedler H."/>
            <person name="von Wettstein D."/>
            <person name="Wambutt R."/>
            <person name="Zagulski M."/>
            <person name="Zollner A."/>
            <person name="Karpfinger-Hartl L."/>
        </authorList>
    </citation>
    <scope>NUCLEOTIDE SEQUENCE [LARGE SCALE GENOMIC DNA]</scope>
    <source>
        <strain>ATCC 204508 / S288c</strain>
    </source>
</reference>
<reference key="2">
    <citation type="journal article" date="2014" name="G3 (Bethesda)">
        <title>The reference genome sequence of Saccharomyces cerevisiae: Then and now.</title>
        <authorList>
            <person name="Engel S.R."/>
            <person name="Dietrich F.S."/>
            <person name="Fisk D.G."/>
            <person name="Binkley G."/>
            <person name="Balakrishnan R."/>
            <person name="Costanzo M.C."/>
            <person name="Dwight S.S."/>
            <person name="Hitz B.C."/>
            <person name="Karra K."/>
            <person name="Nash R.S."/>
            <person name="Weng S."/>
            <person name="Wong E.D."/>
            <person name="Lloyd P."/>
            <person name="Skrzypek M.S."/>
            <person name="Miyasato S.R."/>
            <person name="Simison M."/>
            <person name="Cherry J.M."/>
        </authorList>
    </citation>
    <scope>GENOME REANNOTATION</scope>
    <source>
        <strain>ATCC 204508 / S288c</strain>
    </source>
</reference>
<reference key="3">
    <citation type="journal article" date="2003" name="Nature">
        <title>Global analysis of protein expression in yeast.</title>
        <authorList>
            <person name="Ghaemmaghami S."/>
            <person name="Huh W.-K."/>
            <person name="Bower K."/>
            <person name="Howson R.W."/>
            <person name="Belle A."/>
            <person name="Dephoure N."/>
            <person name="O'Shea E.K."/>
            <person name="Weissman J.S."/>
        </authorList>
    </citation>
    <scope>LEVEL OF PROTEIN EXPRESSION [LARGE SCALE ANALYSIS]</scope>
</reference>
<reference key="4">
    <citation type="journal article" date="2006" name="Proc. Natl. Acad. Sci. U.S.A.">
        <title>A global topology map of the Saccharomyces cerevisiae membrane proteome.</title>
        <authorList>
            <person name="Kim H."/>
            <person name="Melen K."/>
            <person name="Oesterberg M."/>
            <person name="von Heijne G."/>
        </authorList>
    </citation>
    <scope>TOPOLOGY [LARGE SCALE ANALYSIS]</scope>
    <source>
        <strain>ATCC 208353 / W303-1A</strain>
    </source>
</reference>
<keyword id="KW-0472">Membrane</keyword>
<keyword id="KW-1185">Reference proteome</keyword>
<keyword id="KW-0812">Transmembrane</keyword>
<keyword id="KW-1133">Transmembrane helix</keyword>
<evidence type="ECO:0000255" key="1"/>
<evidence type="ECO:0000269" key="2">
    <source>
    </source>
</evidence>
<evidence type="ECO:0000305" key="3"/>
<organism>
    <name type="scientific">Saccharomyces cerevisiae (strain ATCC 204508 / S288c)</name>
    <name type="common">Baker's yeast</name>
    <dbReference type="NCBI Taxonomy" id="559292"/>
    <lineage>
        <taxon>Eukaryota</taxon>
        <taxon>Fungi</taxon>
        <taxon>Dikarya</taxon>
        <taxon>Ascomycota</taxon>
        <taxon>Saccharomycotina</taxon>
        <taxon>Saccharomycetes</taxon>
        <taxon>Saccharomycetales</taxon>
        <taxon>Saccharomycetaceae</taxon>
        <taxon>Saccharomyces</taxon>
    </lineage>
</organism>
<comment type="subcellular location">
    <subcellularLocation>
        <location>Membrane</location>
        <topology>Multi-pass membrane protein</topology>
    </subcellularLocation>
</comment>
<comment type="miscellaneous">
    <text evidence="2">Present with 815 molecules/cell in log phase SD medium.</text>
</comment>
<comment type="similarity">
    <text evidence="3">Belongs to the DUP/COS family.</text>
</comment>
<sequence>MKENELKNEKSVDVLSFKQLESQKIVLPQDLFRSSFTWFCYEIYKSLAFPIWMLLWLPLSVWWKLSNNCIYPLIVSLLVLFLGPIFVLVICGLSRKRSLSKQLIQFCKEVTENTPSSDPHDWEVVAANLNSYLYENKAWNTRYFFFNAMGCQEAFRTTLLEPFSLKKDEAAKVKSFKDSVPYIEEALGVYFREVEKQWKLFNTEKSWSPVGLEDVQLPKDIHRSKLTWFLKRIFTIYSLPLWLAFLNCICVSQHFCLAFRILCPGLFFLMMVWLFQNMRTTALLVKMEHKMQFLLTIINEQESGANGWDEIARKMNRYLFEKKAWKNEEFFFEGIDCEWFFSHFFYRLLSAKKSMWLLPLNVELWPYIKEAQLSRNEESLMKK</sequence>
<dbReference type="EMBL" id="Z49661">
    <property type="protein sequence ID" value="CAA89694.1"/>
    <property type="molecule type" value="Genomic_DNA"/>
</dbReference>
<dbReference type="EMBL" id="BK006943">
    <property type="protein sequence ID" value="DAA08945.1"/>
    <property type="molecule type" value="Genomic_DNA"/>
</dbReference>
<dbReference type="PIR" id="S57191">
    <property type="entry name" value="S57191"/>
</dbReference>
<dbReference type="RefSeq" id="NP_012695.3">
    <property type="nucleotide sequence ID" value="NM_001181819.3"/>
</dbReference>
<dbReference type="BioGRID" id="33915">
    <property type="interactions" value="71"/>
</dbReference>
<dbReference type="DIP" id="DIP-7521N"/>
<dbReference type="FunCoup" id="P47187">
    <property type="interactions" value="42"/>
</dbReference>
<dbReference type="IntAct" id="P47187">
    <property type="interactions" value="1"/>
</dbReference>
<dbReference type="STRING" id="4932.YJR161C"/>
<dbReference type="iPTMnet" id="P47187"/>
<dbReference type="PaxDb" id="4932-YJR161C"/>
<dbReference type="PeptideAtlas" id="P47187"/>
<dbReference type="EnsemblFungi" id="YJR161C_mRNA">
    <property type="protein sequence ID" value="YJR161C"/>
    <property type="gene ID" value="YJR161C"/>
</dbReference>
<dbReference type="GeneID" id="853626"/>
<dbReference type="KEGG" id="sce:YJR161C"/>
<dbReference type="AGR" id="SGD:S000003922"/>
<dbReference type="SGD" id="S000003922">
    <property type="gene designation" value="COS5"/>
</dbReference>
<dbReference type="VEuPathDB" id="FungiDB:YJR161C"/>
<dbReference type="eggNOG" id="ENOG502SAGH">
    <property type="taxonomic scope" value="Eukaryota"/>
</dbReference>
<dbReference type="GeneTree" id="ENSGT00940000176283"/>
<dbReference type="HOGENOM" id="CLU_062892_1_0_1"/>
<dbReference type="InParanoid" id="P47187"/>
<dbReference type="OMA" id="FLATIMH"/>
<dbReference type="OrthoDB" id="4070625at2759"/>
<dbReference type="BioCyc" id="YEAST:G3O-31770-MONOMER"/>
<dbReference type="BioGRID-ORCS" id="853626">
    <property type="hits" value="0 hits in 10 CRISPR screens"/>
</dbReference>
<dbReference type="PRO" id="PR:P47187"/>
<dbReference type="Proteomes" id="UP000002311">
    <property type="component" value="Chromosome X"/>
</dbReference>
<dbReference type="RNAct" id="P47187">
    <property type="molecule type" value="protein"/>
</dbReference>
<dbReference type="GO" id="GO:0005768">
    <property type="term" value="C:endosome"/>
    <property type="evidence" value="ECO:0000314"/>
    <property type="project" value="SGD"/>
</dbReference>
<dbReference type="GO" id="GO:0000324">
    <property type="term" value="C:fungal-type vacuole"/>
    <property type="evidence" value="ECO:0007005"/>
    <property type="project" value="SGD"/>
</dbReference>
<dbReference type="GO" id="GO:0016020">
    <property type="term" value="C:membrane"/>
    <property type="evidence" value="ECO:0007669"/>
    <property type="project" value="UniProtKB-SubCell"/>
</dbReference>
<dbReference type="GO" id="GO:0043328">
    <property type="term" value="P:protein transport to vacuole involved in ubiquitin-dependent protein catabolic process via the multivesicular body sorting pathway"/>
    <property type="evidence" value="ECO:0000315"/>
    <property type="project" value="SGD"/>
</dbReference>
<dbReference type="InterPro" id="IPR001142">
    <property type="entry name" value="DUP/COS"/>
</dbReference>
<dbReference type="Pfam" id="PF00674">
    <property type="entry name" value="DUP"/>
    <property type="match status" value="2"/>
</dbReference>
<gene>
    <name type="primary">COS5</name>
    <name type="ordered locus">YJR161C</name>
    <name type="ORF">J2410</name>
</gene>
<proteinExistence type="evidence at protein level"/>
<name>COS5_YEAST</name>
<feature type="chain" id="PRO_0000207516" description="Protein COS5">
    <location>
        <begin position="1"/>
        <end position="383"/>
    </location>
</feature>
<feature type="topological domain" description="Cytoplasmic" evidence="1">
    <location>
        <begin position="1"/>
        <end position="42"/>
    </location>
</feature>
<feature type="transmembrane region" description="Helical" evidence="1">
    <location>
        <begin position="43"/>
        <end position="63"/>
    </location>
</feature>
<feature type="topological domain" description="Extracellular" evidence="1">
    <location>
        <begin position="64"/>
        <end position="72"/>
    </location>
</feature>
<feature type="transmembrane region" description="Helical" evidence="1">
    <location>
        <begin position="73"/>
        <end position="93"/>
    </location>
</feature>
<feature type="topological domain" description="Cytoplasmic" evidence="1">
    <location>
        <begin position="94"/>
        <end position="232"/>
    </location>
</feature>
<feature type="transmembrane region" description="Helical" evidence="1">
    <location>
        <begin position="233"/>
        <end position="253"/>
    </location>
</feature>
<feature type="topological domain" description="Extracellular" evidence="1">
    <location>
        <position position="254"/>
    </location>
</feature>
<feature type="transmembrane region" description="Helical" evidence="1">
    <location>
        <begin position="255"/>
        <end position="275"/>
    </location>
</feature>
<feature type="topological domain" description="Cytoplasmic" evidence="1">
    <location>
        <begin position="276"/>
        <end position="383"/>
    </location>
</feature>
<accession>P47187</accession>
<accession>D6VWX9</accession>